<accession>Q8K4G1</accession>
<accession>E9QPD9</accession>
<accession>Q8K4G0</accession>
<feature type="signal peptide" evidence="3">
    <location>
        <begin position="1"/>
        <end position="24"/>
    </location>
</feature>
<feature type="chain" id="PRO_0000007648" description="Latent-transforming growth factor beta-binding protein 4">
    <location>
        <begin position="25"/>
        <end position="1666"/>
    </location>
</feature>
<feature type="domain" description="EGF-like 1" evidence="4">
    <location>
        <begin position="148"/>
        <end position="180"/>
    </location>
</feature>
<feature type="domain" description="TB 1" evidence="5">
    <location>
        <begin position="286"/>
        <end position="338"/>
    </location>
</feature>
<feature type="domain" description="EGF-like 2; calcium-binding" evidence="4">
    <location>
        <begin position="356"/>
        <end position="396"/>
    </location>
</feature>
<feature type="domain" description="TB 2" evidence="5">
    <location>
        <begin position="406"/>
        <end position="458"/>
    </location>
</feature>
<feature type="domain" description="EGF-like 3" evidence="4">
    <location>
        <begin position="588"/>
        <end position="629"/>
    </location>
</feature>
<feature type="domain" description="EGF-like 4; calcium-binding" evidence="4">
    <location>
        <begin position="630"/>
        <end position="671"/>
    </location>
</feature>
<feature type="domain" description="EGF-like 5; calcium-binding" evidence="4">
    <location>
        <begin position="672"/>
        <end position="713"/>
    </location>
</feature>
<feature type="domain" description="EGF-like 6; calcium-binding" evidence="4">
    <location>
        <begin position="714"/>
        <end position="751"/>
    </location>
</feature>
<feature type="domain" description="EGF-like 7; calcium-binding" evidence="4">
    <location>
        <begin position="753"/>
        <end position="794"/>
    </location>
</feature>
<feature type="domain" description="EGF-like 8; calcium-binding" evidence="4">
    <location>
        <begin position="795"/>
        <end position="836"/>
    </location>
</feature>
<feature type="domain" description="EGF-like 9; calcium-binding" evidence="4">
    <location>
        <begin position="877"/>
        <end position="919"/>
    </location>
</feature>
<feature type="domain" description="EGF-like 10; calcium-binding" evidence="4">
    <location>
        <begin position="920"/>
        <end position="961"/>
    </location>
</feature>
<feature type="domain" description="EGF-like 11; calcium-binding" evidence="4">
    <location>
        <begin position="962"/>
        <end position="1002"/>
    </location>
</feature>
<feature type="domain" description="EGF-like 12; calcium-binding" evidence="4">
    <location>
        <begin position="1091"/>
        <end position="1132"/>
    </location>
</feature>
<feature type="domain" description="TB 3" evidence="5">
    <location>
        <begin position="1223"/>
        <end position="1277"/>
    </location>
</feature>
<feature type="domain" description="EGF-like 13; calcium-binding" evidence="4">
    <location>
        <begin position="1295"/>
        <end position="1337"/>
    </location>
</feature>
<feature type="domain" description="EGF-like 14; calcium-binding" evidence="4">
    <location>
        <begin position="1338"/>
        <end position="1379"/>
    </location>
</feature>
<feature type="domain" description="TB 4" evidence="5">
    <location>
        <begin position="1391"/>
        <end position="1444"/>
    </location>
</feature>
<feature type="domain" description="EGF-like 15" evidence="4">
    <location>
        <begin position="1575"/>
        <end position="1615"/>
    </location>
</feature>
<feature type="domain" description="EGF-like 16" evidence="4">
    <location>
        <begin position="1616"/>
        <end position="1660"/>
    </location>
</feature>
<feature type="region of interest" description="Disordered" evidence="6">
    <location>
        <begin position="473"/>
        <end position="590"/>
    </location>
</feature>
<feature type="region of interest" description="Disordered" evidence="6">
    <location>
        <begin position="1171"/>
        <end position="1221"/>
    </location>
</feature>
<feature type="region of interest" description="Disordered" evidence="6">
    <location>
        <begin position="1488"/>
        <end position="1566"/>
    </location>
</feature>
<feature type="compositionally biased region" description="Pro residues" evidence="6">
    <location>
        <begin position="491"/>
        <end position="502"/>
    </location>
</feature>
<feature type="compositionally biased region" description="Basic and acidic residues" evidence="6">
    <location>
        <begin position="521"/>
        <end position="561"/>
    </location>
</feature>
<feature type="compositionally biased region" description="Pro residues" evidence="6">
    <location>
        <begin position="562"/>
        <end position="573"/>
    </location>
</feature>
<feature type="compositionally biased region" description="Low complexity" evidence="6">
    <location>
        <begin position="579"/>
        <end position="590"/>
    </location>
</feature>
<feature type="compositionally biased region" description="Low complexity" evidence="6">
    <location>
        <begin position="1185"/>
        <end position="1197"/>
    </location>
</feature>
<feature type="compositionally biased region" description="Pro residues" evidence="6">
    <location>
        <begin position="1198"/>
        <end position="1215"/>
    </location>
</feature>
<feature type="compositionally biased region" description="Pro residues" evidence="6">
    <location>
        <begin position="1488"/>
        <end position="1500"/>
    </location>
</feature>
<feature type="modified residue" description="Phosphothreonine" evidence="13">
    <location>
        <position position="1564"/>
    </location>
</feature>
<feature type="glycosylation site" description="N-linked (GlcNAc...) asparagine" evidence="3">
    <location>
        <position position="351"/>
    </location>
</feature>
<feature type="glycosylation site" description="N-linked (GlcNAc...) asparagine" evidence="3">
    <location>
        <position position="424"/>
    </location>
</feature>
<feature type="glycosylation site" description="N-linked (GlcNAc...) asparagine" evidence="3">
    <location>
        <position position="1097"/>
    </location>
</feature>
<feature type="glycosylation site" description="N-linked (GlcNAc...) asparagine" evidence="3">
    <location>
        <position position="1242"/>
    </location>
</feature>
<feature type="glycosylation site" description="N-linked (GlcNAc...) asparagine" evidence="3">
    <location>
        <position position="1381"/>
    </location>
</feature>
<feature type="disulfide bond" evidence="4">
    <location>
        <begin position="152"/>
        <end position="162"/>
    </location>
</feature>
<feature type="disulfide bond" evidence="4">
    <location>
        <begin position="156"/>
        <end position="168"/>
    </location>
</feature>
<feature type="disulfide bond" evidence="4">
    <location>
        <begin position="170"/>
        <end position="179"/>
    </location>
</feature>
<feature type="disulfide bond" evidence="5">
    <location>
        <begin position="288"/>
        <end position="310"/>
    </location>
</feature>
<feature type="disulfide bond" evidence="5">
    <location>
        <begin position="297"/>
        <end position="323"/>
    </location>
</feature>
<feature type="disulfide bond" evidence="5">
    <location>
        <begin position="311"/>
        <end position="326"/>
    </location>
</feature>
<feature type="disulfide bond" evidence="4">
    <location>
        <begin position="360"/>
        <end position="371"/>
    </location>
</feature>
<feature type="disulfide bond" evidence="4">
    <location>
        <begin position="366"/>
        <end position="380"/>
    </location>
</feature>
<feature type="disulfide bond" evidence="4">
    <location>
        <begin position="382"/>
        <end position="395"/>
    </location>
</feature>
<feature type="disulfide bond" evidence="5">
    <location>
        <begin position="408"/>
        <end position="430"/>
    </location>
</feature>
<feature type="disulfide bond" evidence="5">
    <location>
        <begin position="417"/>
        <end position="443"/>
    </location>
</feature>
<feature type="disulfide bond" evidence="5">
    <location>
        <begin position="431"/>
        <end position="446"/>
    </location>
</feature>
<feature type="disulfide bond" evidence="5">
    <location>
        <begin position="432"/>
        <end position="458"/>
    </location>
</feature>
<feature type="disulfide bond" evidence="4">
    <location>
        <begin position="592"/>
        <end position="604"/>
    </location>
</feature>
<feature type="disulfide bond" evidence="4">
    <location>
        <begin position="599"/>
        <end position="613"/>
    </location>
</feature>
<feature type="disulfide bond" evidence="4">
    <location>
        <begin position="615"/>
        <end position="628"/>
    </location>
</feature>
<feature type="disulfide bond" evidence="4">
    <location>
        <begin position="634"/>
        <end position="646"/>
    </location>
</feature>
<feature type="disulfide bond" evidence="4">
    <location>
        <begin position="641"/>
        <end position="655"/>
    </location>
</feature>
<feature type="disulfide bond" evidence="4">
    <location>
        <begin position="657"/>
        <end position="670"/>
    </location>
</feature>
<feature type="disulfide bond" evidence="4">
    <location>
        <begin position="676"/>
        <end position="688"/>
    </location>
</feature>
<feature type="disulfide bond" evidence="4">
    <location>
        <begin position="683"/>
        <end position="697"/>
    </location>
</feature>
<feature type="disulfide bond" evidence="4">
    <location>
        <begin position="699"/>
        <end position="712"/>
    </location>
</feature>
<feature type="disulfide bond" evidence="4">
    <location>
        <begin position="718"/>
        <end position="730"/>
    </location>
</feature>
<feature type="disulfide bond" evidence="4">
    <location>
        <begin position="725"/>
        <end position="739"/>
    </location>
</feature>
<feature type="disulfide bond" evidence="4">
    <location>
        <begin position="741"/>
        <end position="750"/>
    </location>
</feature>
<feature type="disulfide bond" evidence="4">
    <location>
        <begin position="757"/>
        <end position="769"/>
    </location>
</feature>
<feature type="disulfide bond" evidence="4">
    <location>
        <begin position="764"/>
        <end position="778"/>
    </location>
</feature>
<feature type="disulfide bond" evidence="4">
    <location>
        <begin position="780"/>
        <end position="793"/>
    </location>
</feature>
<feature type="disulfide bond" evidence="4">
    <location>
        <begin position="799"/>
        <end position="811"/>
    </location>
</feature>
<feature type="disulfide bond" evidence="4">
    <location>
        <begin position="806"/>
        <end position="820"/>
    </location>
</feature>
<feature type="disulfide bond" evidence="4">
    <location>
        <begin position="822"/>
        <end position="835"/>
    </location>
</feature>
<feature type="disulfide bond" evidence="4">
    <location>
        <begin position="881"/>
        <end position="893"/>
    </location>
</feature>
<feature type="disulfide bond" evidence="4">
    <location>
        <begin position="887"/>
        <end position="902"/>
    </location>
</feature>
<feature type="disulfide bond" evidence="4">
    <location>
        <begin position="904"/>
        <end position="918"/>
    </location>
</feature>
<feature type="disulfide bond" evidence="4">
    <location>
        <begin position="924"/>
        <end position="936"/>
    </location>
</feature>
<feature type="disulfide bond" evidence="4">
    <location>
        <begin position="930"/>
        <end position="945"/>
    </location>
</feature>
<feature type="disulfide bond" evidence="4">
    <location>
        <begin position="947"/>
        <end position="960"/>
    </location>
</feature>
<feature type="disulfide bond" evidence="4">
    <location>
        <begin position="966"/>
        <end position="977"/>
    </location>
</feature>
<feature type="disulfide bond" evidence="4">
    <location>
        <begin position="972"/>
        <end position="986"/>
    </location>
</feature>
<feature type="disulfide bond" evidence="4">
    <location>
        <begin position="988"/>
        <end position="1001"/>
    </location>
</feature>
<feature type="disulfide bond" evidence="4">
    <location>
        <begin position="1095"/>
        <end position="1107"/>
    </location>
</feature>
<feature type="disulfide bond" evidence="4">
    <location>
        <begin position="1101"/>
        <end position="1116"/>
    </location>
</feature>
<feature type="disulfide bond" evidence="4">
    <location>
        <begin position="1118"/>
        <end position="1131"/>
    </location>
</feature>
<feature type="disulfide bond" evidence="5">
    <location>
        <begin position="1225"/>
        <end position="1248"/>
    </location>
</feature>
<feature type="disulfide bond" evidence="5">
    <location>
        <begin position="1235"/>
        <end position="1260"/>
    </location>
</feature>
<feature type="disulfide bond" description="Interchain (with C-33 in TGFB1); in linked form" evidence="1">
    <location>
        <position position="1235"/>
    </location>
</feature>
<feature type="disulfide bond" evidence="5">
    <location>
        <begin position="1249"/>
        <end position="1265"/>
    </location>
</feature>
<feature type="disulfide bond" evidence="5">
    <location>
        <begin position="1250"/>
        <end position="1277"/>
    </location>
</feature>
<feature type="disulfide bond" description="Interchain (with C-33 in TGFB1); in linked form" evidence="1">
    <location>
        <position position="1260"/>
    </location>
</feature>
<feature type="disulfide bond" evidence="4">
    <location>
        <begin position="1299"/>
        <end position="1312"/>
    </location>
</feature>
<feature type="disulfide bond" evidence="4">
    <location>
        <begin position="1307"/>
        <end position="1321"/>
    </location>
</feature>
<feature type="disulfide bond" evidence="4">
    <location>
        <begin position="1323"/>
        <end position="1336"/>
    </location>
</feature>
<feature type="disulfide bond" evidence="4">
    <location>
        <begin position="1342"/>
        <end position="1354"/>
    </location>
</feature>
<feature type="disulfide bond" evidence="4">
    <location>
        <begin position="1349"/>
        <end position="1363"/>
    </location>
</feature>
<feature type="disulfide bond" evidence="4">
    <location>
        <begin position="1365"/>
        <end position="1378"/>
    </location>
</feature>
<feature type="disulfide bond" evidence="5">
    <location>
        <begin position="1393"/>
        <end position="1417"/>
    </location>
</feature>
<feature type="disulfide bond" evidence="5">
    <location>
        <begin position="1403"/>
        <end position="1429"/>
    </location>
</feature>
<feature type="disulfide bond" evidence="5">
    <location>
        <begin position="1418"/>
        <end position="1432"/>
    </location>
</feature>
<feature type="disulfide bond" evidence="5">
    <location>
        <begin position="1419"/>
        <end position="1444"/>
    </location>
</feature>
<feature type="disulfide bond" evidence="4">
    <location>
        <begin position="1579"/>
        <end position="1590"/>
    </location>
</feature>
<feature type="disulfide bond" evidence="4">
    <location>
        <begin position="1585"/>
        <end position="1599"/>
    </location>
</feature>
<feature type="disulfide bond" evidence="4">
    <location>
        <begin position="1601"/>
        <end position="1614"/>
    </location>
</feature>
<feature type="disulfide bond" evidence="4">
    <location>
        <begin position="1620"/>
        <end position="1635"/>
    </location>
</feature>
<feature type="disulfide bond" evidence="4">
    <location>
        <begin position="1630"/>
        <end position="1644"/>
    </location>
</feature>
<feature type="disulfide bond" evidence="4">
    <location>
        <begin position="1646"/>
        <end position="1659"/>
    </location>
</feature>
<feature type="splice variant" id="VSP_009248" description="In isoform 2." evidence="10">
    <location>
        <begin position="1"/>
        <end position="66"/>
    </location>
</feature>
<feature type="splice variant" id="VSP_009249" description="In isoform 3." evidence="11">
    <original>KSSRCTRASCRVRNCPPAKCTGLEGCLTPTPSVPSPSRSPVEKSQVSLNWQPLTLQEARALLRQRRPRGPWARALLKRRPPHRAPAGQARV</original>
    <variation>RHEAALQPWRAARSCSGCRYWCCWRSWGRSPYWADPESVFACASPPLCAACVASTGPLAPAVPRPARPATPPVDSGAPGGAAPGGPGFRAF</variation>
    <location>
        <begin position="60"/>
        <end position="150"/>
    </location>
</feature>
<feature type="splice variant" id="VSP_009250" description="In isoform 2." evidence="10">
    <original>ASCRVRNCPPAKCTGLEGCLTPTPSVPSPSRSPVEKSQVSLNWQPLTLQEARALLRQRRPRGPWARALLKRRPPHRAPAGQARV</original>
    <variation>MAGGAQLLWVSLLVLLAQLGPQPVLGRPRERLRVRFTPAVCGLRCIHGPTGSRCTPTCAPRNATSVDSGAPGGAAPGGPGFRAF</variation>
    <location>
        <begin position="67"/>
        <end position="150"/>
    </location>
</feature>
<feature type="sequence conflict" description="In Ref. 3; AAH59016." evidence="12" ref="3">
    <original>A</original>
    <variation>S</variation>
    <location>
        <position position="361"/>
    </location>
</feature>
<feature type="sequence conflict" description="In Ref. 1; AAN04661." evidence="12" ref="1">
    <original>G</original>
    <variation>D</variation>
    <location>
        <position position="625"/>
    </location>
</feature>
<feature type="sequence conflict" description="In Ref. 1; AAN04661/AAN04662." evidence="12" ref="1">
    <original>V</original>
    <variation>I</variation>
    <location>
        <position position="1631"/>
    </location>
</feature>
<proteinExistence type="evidence at protein level"/>
<keyword id="KW-0025">Alternative splicing</keyword>
<keyword id="KW-1015">Disulfide bond</keyword>
<keyword id="KW-0245">EGF-like domain</keyword>
<keyword id="KW-0272">Extracellular matrix</keyword>
<keyword id="KW-0325">Glycoprotein</keyword>
<keyword id="KW-0340">Growth factor binding</keyword>
<keyword id="KW-0597">Phosphoprotein</keyword>
<keyword id="KW-1185">Reference proteome</keyword>
<keyword id="KW-0677">Repeat</keyword>
<keyword id="KW-0964">Secreted</keyword>
<keyword id="KW-0732">Signal</keyword>
<organism>
    <name type="scientific">Mus musculus</name>
    <name type="common">Mouse</name>
    <dbReference type="NCBI Taxonomy" id="10090"/>
    <lineage>
        <taxon>Eukaryota</taxon>
        <taxon>Metazoa</taxon>
        <taxon>Chordata</taxon>
        <taxon>Craniata</taxon>
        <taxon>Vertebrata</taxon>
        <taxon>Euteleostomi</taxon>
        <taxon>Mammalia</taxon>
        <taxon>Eutheria</taxon>
        <taxon>Euarchontoglires</taxon>
        <taxon>Glires</taxon>
        <taxon>Rodentia</taxon>
        <taxon>Myomorpha</taxon>
        <taxon>Muroidea</taxon>
        <taxon>Muridae</taxon>
        <taxon>Murinae</taxon>
        <taxon>Mus</taxon>
        <taxon>Mus</taxon>
    </lineage>
</organism>
<name>LTBP4_MOUSE</name>
<comment type="function">
    <text evidence="1">Key regulator of transforming growth factor beta (TGFB1, TGFB2 and TGFB3) that controls TGF-beta activation by maintaining it in a latent state during storage in extracellular space. Associates specifically via disulfide bonds with the Latency-associated peptide (LAP), which is the regulatory chain of TGF-beta, and regulates integrin-dependent activation of TGF-beta.</text>
</comment>
<comment type="subunit">
    <text evidence="2 9">Forms part of the large latent transforming growth factor beta precursor complex; removal is essential for activation of complex. Interacts with LTBP1 and TGFB1. Interacts with EFEMP2; this interaction promotes fibrillar deposition of EFEMP2 (PubMed:25713297).</text>
</comment>
<comment type="subcellular location">
    <subcellularLocation>
        <location evidence="2">Secreted</location>
        <location evidence="2">Extracellular space</location>
        <location evidence="2">Extracellular matrix</location>
    </subcellularLocation>
</comment>
<comment type="alternative products">
    <event type="alternative splicing"/>
    <isoform>
        <id>Q8K4G1-1</id>
        <name>1</name>
        <name>LTBP4L</name>
        <sequence type="displayed"/>
    </isoform>
    <isoform>
        <id>Q8K4G1-2</id>
        <name>2</name>
        <name>LTBP4S</name>
        <sequence type="described" ref="VSP_009248 VSP_009250"/>
    </isoform>
    <isoform>
        <id>Q8K4G1-3</id>
        <name>3</name>
        <sequence type="described" ref="VSP_009249"/>
    </isoform>
</comment>
<comment type="PTM">
    <text evidence="1">Contains hydroxylated asparagine residues.</text>
</comment>
<comment type="disruption phenotype">
    <text evidence="7 8">Mice reveal significant disruption of elastic fibers in multiple tissues. They develop pulmonary septation defects, rectal prolapse, colorectal adenomas, and dilated cardiomyopathy. They survive up to six months (mid-adult age) without major clinical symptoms.</text>
</comment>
<comment type="miscellaneous">
    <molecule>Isoform 3</molecule>
    <text evidence="12">Sequence incomplete.</text>
</comment>
<comment type="similarity">
    <text evidence="12">Belongs to the LTBP family.</text>
</comment>
<dbReference type="EMBL" id="AF410798">
    <property type="protein sequence ID" value="AAN04661.1"/>
    <property type="molecule type" value="mRNA"/>
</dbReference>
<dbReference type="EMBL" id="AF410799">
    <property type="protein sequence ID" value="AAN04662.1"/>
    <property type="molecule type" value="mRNA"/>
</dbReference>
<dbReference type="EMBL" id="AC157561">
    <property type="status" value="NOT_ANNOTATED_CDS"/>
    <property type="molecule type" value="Genomic_DNA"/>
</dbReference>
<dbReference type="EMBL" id="BC059016">
    <property type="protein sequence ID" value="AAH59016.1"/>
    <property type="molecule type" value="mRNA"/>
</dbReference>
<dbReference type="CCDS" id="CCDS21017.1">
    <molecule id="Q8K4G1-1"/>
</dbReference>
<dbReference type="CCDS" id="CCDS52158.1">
    <molecule id="Q8K4G1-2"/>
</dbReference>
<dbReference type="RefSeq" id="NP_001107021.1">
    <molecule id="Q8K4G1-2"/>
    <property type="nucleotide sequence ID" value="NM_001113549.1"/>
</dbReference>
<dbReference type="RefSeq" id="NP_783572.2">
    <molecule id="Q8K4G1-1"/>
    <property type="nucleotide sequence ID" value="NM_175641.2"/>
</dbReference>
<dbReference type="CORUM" id="Q8K4G1"/>
<dbReference type="FunCoup" id="Q8K4G1">
    <property type="interactions" value="158"/>
</dbReference>
<dbReference type="IntAct" id="Q8K4G1">
    <property type="interactions" value="1"/>
</dbReference>
<dbReference type="STRING" id="10090.ENSMUSP00000037536"/>
<dbReference type="GlyCosmos" id="Q8K4G1">
    <property type="glycosylation" value="5 sites, No reported glycans"/>
</dbReference>
<dbReference type="GlyGen" id="Q8K4G1">
    <property type="glycosylation" value="7 sites"/>
</dbReference>
<dbReference type="iPTMnet" id="Q8K4G1"/>
<dbReference type="PhosphoSitePlus" id="Q8K4G1"/>
<dbReference type="CPTAC" id="non-CPTAC-3427"/>
<dbReference type="jPOST" id="Q8K4G1"/>
<dbReference type="PaxDb" id="10090-ENSMUSP00000037536"/>
<dbReference type="PeptideAtlas" id="Q8K4G1"/>
<dbReference type="ProteomicsDB" id="292127">
    <molecule id="Q8K4G1-1"/>
</dbReference>
<dbReference type="ProteomicsDB" id="292128">
    <molecule id="Q8K4G1-2"/>
</dbReference>
<dbReference type="ProteomicsDB" id="292129">
    <molecule id="Q8K4G1-3"/>
</dbReference>
<dbReference type="Antibodypedia" id="4199">
    <property type="antibodies" value="80 antibodies from 17 providers"/>
</dbReference>
<dbReference type="DNASU" id="108075"/>
<dbReference type="Ensembl" id="ENSMUST00000038618.13">
    <molecule id="Q8K4G1-1"/>
    <property type="protein sequence ID" value="ENSMUSP00000037536.7"/>
    <property type="gene ID" value="ENSMUSG00000040488.20"/>
</dbReference>
<dbReference type="Ensembl" id="ENSMUST00000121175.8">
    <molecule id="Q8K4G1-2"/>
    <property type="protein sequence ID" value="ENSMUSP00000113674.2"/>
    <property type="gene ID" value="ENSMUSG00000040488.20"/>
</dbReference>
<dbReference type="GeneID" id="108075"/>
<dbReference type="KEGG" id="mmu:108075"/>
<dbReference type="UCSC" id="uc009fvs.2">
    <molecule id="Q8K4G1-2"/>
    <property type="organism name" value="mouse"/>
</dbReference>
<dbReference type="UCSC" id="uc009fvt.2">
    <molecule id="Q8K4G1-1"/>
    <property type="organism name" value="mouse"/>
</dbReference>
<dbReference type="AGR" id="MGI:1321395"/>
<dbReference type="CTD" id="8425"/>
<dbReference type="MGI" id="MGI:1321395">
    <property type="gene designation" value="Ltbp4"/>
</dbReference>
<dbReference type="VEuPathDB" id="HostDB:ENSMUSG00000040488"/>
<dbReference type="eggNOG" id="KOG1217">
    <property type="taxonomic scope" value="Eukaryota"/>
</dbReference>
<dbReference type="GeneTree" id="ENSGT00940000158234"/>
<dbReference type="HOGENOM" id="CLU_001884_0_0_1"/>
<dbReference type="InParanoid" id="Q8K4G1"/>
<dbReference type="OMA" id="NHAGICE"/>
<dbReference type="OrthoDB" id="10045365at2759"/>
<dbReference type="PhylomeDB" id="Q8K4G1"/>
<dbReference type="TreeFam" id="TF317514"/>
<dbReference type="Reactome" id="R-MMU-2129379">
    <property type="pathway name" value="Molecules associated with elastic fibres"/>
</dbReference>
<dbReference type="Reactome" id="R-MMU-2173789">
    <property type="pathway name" value="TGF-beta receptor signaling activates SMADs"/>
</dbReference>
<dbReference type="BioGRID-ORCS" id="108075">
    <property type="hits" value="2 hits in 76 CRISPR screens"/>
</dbReference>
<dbReference type="ChiTaRS" id="Ltbp4">
    <property type="organism name" value="mouse"/>
</dbReference>
<dbReference type="PRO" id="PR:Q8K4G1"/>
<dbReference type="Proteomes" id="UP000000589">
    <property type="component" value="Chromosome 7"/>
</dbReference>
<dbReference type="RNAct" id="Q8K4G1">
    <property type="molecule type" value="protein"/>
</dbReference>
<dbReference type="Bgee" id="ENSMUSG00000040488">
    <property type="expression patterns" value="Expressed in lip and 212 other cell types or tissues"/>
</dbReference>
<dbReference type="ExpressionAtlas" id="Q8K4G1">
    <property type="expression patterns" value="baseline and differential"/>
</dbReference>
<dbReference type="GO" id="GO:0062023">
    <property type="term" value="C:collagen-containing extracellular matrix"/>
    <property type="evidence" value="ECO:0007005"/>
    <property type="project" value="BHF-UCL"/>
</dbReference>
<dbReference type="GO" id="GO:0031012">
    <property type="term" value="C:extracellular matrix"/>
    <property type="evidence" value="ECO:0000314"/>
    <property type="project" value="MGI"/>
</dbReference>
<dbReference type="GO" id="GO:0005576">
    <property type="term" value="C:extracellular region"/>
    <property type="evidence" value="ECO:0007669"/>
    <property type="project" value="UniProtKB-KW"/>
</dbReference>
<dbReference type="GO" id="GO:0001527">
    <property type="term" value="C:microfibril"/>
    <property type="evidence" value="ECO:0000314"/>
    <property type="project" value="UniProtKB"/>
</dbReference>
<dbReference type="GO" id="GO:0005509">
    <property type="term" value="F:calcium ion binding"/>
    <property type="evidence" value="ECO:0007669"/>
    <property type="project" value="InterPro"/>
</dbReference>
<dbReference type="GO" id="GO:0050431">
    <property type="term" value="F:transforming growth factor beta binding"/>
    <property type="evidence" value="ECO:0007669"/>
    <property type="project" value="Ensembl"/>
</dbReference>
<dbReference type="GO" id="GO:0048251">
    <property type="term" value="P:elastic fiber assembly"/>
    <property type="evidence" value="ECO:0000315"/>
    <property type="project" value="UniProtKB"/>
</dbReference>
<dbReference type="GO" id="GO:0046879">
    <property type="term" value="P:hormone secretion"/>
    <property type="evidence" value="ECO:0000315"/>
    <property type="project" value="MGI"/>
</dbReference>
<dbReference type="GO" id="GO:0007179">
    <property type="term" value="P:transforming growth factor beta receptor signaling pathway"/>
    <property type="evidence" value="ECO:0000315"/>
    <property type="project" value="MGI"/>
</dbReference>
<dbReference type="CDD" id="cd00054">
    <property type="entry name" value="EGF_CA"/>
    <property type="match status" value="13"/>
</dbReference>
<dbReference type="FunFam" id="2.10.25.10:FF:000194">
    <property type="entry name" value="Latent transforming growth factor beta binding protein 2"/>
    <property type="match status" value="1"/>
</dbReference>
<dbReference type="FunFam" id="2.10.25.10:FF:000539">
    <property type="entry name" value="Latent transforming growth factor beta binding protein 4"/>
    <property type="match status" value="1"/>
</dbReference>
<dbReference type="FunFam" id="3.90.290.10:FF:000004">
    <property type="entry name" value="latent-transforming growth factor beta-binding protein 1 isoform X1"/>
    <property type="match status" value="1"/>
</dbReference>
<dbReference type="FunFam" id="2.10.25.10:FF:000046">
    <property type="entry name" value="Latent-transforming growth factor beta-binding protein 1 isoform x2"/>
    <property type="match status" value="1"/>
</dbReference>
<dbReference type="FunFam" id="3.90.290.10:FF:000001">
    <property type="entry name" value="Latent-transforming growth factor beta-binding protein 3 isoform 1"/>
    <property type="match status" value="1"/>
</dbReference>
<dbReference type="FunFam" id="2.10.25.10:FF:000056">
    <property type="entry name" value="Latent-transforming growth factor beta-binding protein 3 isoform 2"/>
    <property type="match status" value="1"/>
</dbReference>
<dbReference type="FunFam" id="2.10.25.10:FF:000017">
    <property type="entry name" value="latent-transforming growth factor beta-binding protein 4 isoform X1"/>
    <property type="match status" value="9"/>
</dbReference>
<dbReference type="FunFam" id="2.10.25.10:FF:000197">
    <property type="entry name" value="latent-transforming growth factor beta-binding protein 4 isoform X1"/>
    <property type="match status" value="1"/>
</dbReference>
<dbReference type="FunFam" id="2.10.25.10:FF:000218">
    <property type="entry name" value="latent-transforming growth factor beta-binding protein 4 isoform X1"/>
    <property type="match status" value="1"/>
</dbReference>
<dbReference type="FunFam" id="2.10.25.10:FF:000343">
    <property type="entry name" value="latent-transforming growth factor beta-binding protein 4 isoform X1"/>
    <property type="match status" value="1"/>
</dbReference>
<dbReference type="FunFam" id="3.90.290.10:FF:000016">
    <property type="entry name" value="latent-transforming growth factor beta-binding protein 4 isoform X1"/>
    <property type="match status" value="1"/>
</dbReference>
<dbReference type="FunFam" id="2.10.25.10:FF:000115">
    <property type="entry name" value="latent-transforming growth factor beta-binding protein 4 isoform X2"/>
    <property type="match status" value="1"/>
</dbReference>
<dbReference type="FunFam" id="2.10.25.10:FF:000160">
    <property type="entry name" value="latent-transforming growth factor beta-binding protein 4 isoform X2"/>
    <property type="match status" value="1"/>
</dbReference>
<dbReference type="FunFam" id="3.90.290.10:FF:000017">
    <property type="entry name" value="latent-transforming growth factor beta-binding protein 4 isoform X2"/>
    <property type="match status" value="1"/>
</dbReference>
<dbReference type="Gene3D" id="2.10.25.10">
    <property type="entry name" value="Laminin"/>
    <property type="match status" value="20"/>
</dbReference>
<dbReference type="Gene3D" id="3.90.290.10">
    <property type="entry name" value="TGF-beta binding (TB) domain"/>
    <property type="match status" value="4"/>
</dbReference>
<dbReference type="InterPro" id="IPR001881">
    <property type="entry name" value="EGF-like_Ca-bd_dom"/>
</dbReference>
<dbReference type="InterPro" id="IPR013032">
    <property type="entry name" value="EGF-like_CS"/>
</dbReference>
<dbReference type="InterPro" id="IPR000742">
    <property type="entry name" value="EGF-like_dom"/>
</dbReference>
<dbReference type="InterPro" id="IPR000152">
    <property type="entry name" value="EGF-type_Asp/Asn_hydroxyl_site"/>
</dbReference>
<dbReference type="InterPro" id="IPR018097">
    <property type="entry name" value="EGF_Ca-bd_CS"/>
</dbReference>
<dbReference type="InterPro" id="IPR009030">
    <property type="entry name" value="Growth_fac_rcpt_cys_sf"/>
</dbReference>
<dbReference type="InterPro" id="IPR049883">
    <property type="entry name" value="NOTCH1_EGF-like"/>
</dbReference>
<dbReference type="InterPro" id="IPR017878">
    <property type="entry name" value="TB_dom"/>
</dbReference>
<dbReference type="InterPro" id="IPR036773">
    <property type="entry name" value="TB_dom_sf"/>
</dbReference>
<dbReference type="PANTHER" id="PTHR24039:SF58">
    <property type="entry name" value="EGF-LIKE DOMAIN-CONTAINING PROTEIN"/>
    <property type="match status" value="1"/>
</dbReference>
<dbReference type="PANTHER" id="PTHR24039">
    <property type="entry name" value="FIBRILLIN-RELATED"/>
    <property type="match status" value="1"/>
</dbReference>
<dbReference type="Pfam" id="PF07645">
    <property type="entry name" value="EGF_CA"/>
    <property type="match status" value="17"/>
</dbReference>
<dbReference type="Pfam" id="PF12661">
    <property type="entry name" value="hEGF"/>
    <property type="match status" value="1"/>
</dbReference>
<dbReference type="Pfam" id="PF00683">
    <property type="entry name" value="TB"/>
    <property type="match status" value="3"/>
</dbReference>
<dbReference type="SMART" id="SM00181">
    <property type="entry name" value="EGF"/>
    <property type="match status" value="20"/>
</dbReference>
<dbReference type="SMART" id="SM00179">
    <property type="entry name" value="EGF_CA"/>
    <property type="match status" value="19"/>
</dbReference>
<dbReference type="SUPFAM" id="SSF57196">
    <property type="entry name" value="EGF/Laminin"/>
    <property type="match status" value="7"/>
</dbReference>
<dbReference type="SUPFAM" id="SSF57184">
    <property type="entry name" value="Growth factor receptor domain"/>
    <property type="match status" value="5"/>
</dbReference>
<dbReference type="SUPFAM" id="SSF57581">
    <property type="entry name" value="TB module/8-cys domain"/>
    <property type="match status" value="4"/>
</dbReference>
<dbReference type="PROSITE" id="PS00010">
    <property type="entry name" value="ASX_HYDROXYL"/>
    <property type="match status" value="14"/>
</dbReference>
<dbReference type="PROSITE" id="PS00022">
    <property type="entry name" value="EGF_1"/>
    <property type="match status" value="2"/>
</dbReference>
<dbReference type="PROSITE" id="PS01186">
    <property type="entry name" value="EGF_2"/>
    <property type="match status" value="12"/>
</dbReference>
<dbReference type="PROSITE" id="PS50026">
    <property type="entry name" value="EGF_3"/>
    <property type="match status" value="16"/>
</dbReference>
<dbReference type="PROSITE" id="PS01187">
    <property type="entry name" value="EGF_CA"/>
    <property type="match status" value="17"/>
</dbReference>
<dbReference type="PROSITE" id="PS51364">
    <property type="entry name" value="TB"/>
    <property type="match status" value="4"/>
</dbReference>
<evidence type="ECO:0000250" key="1">
    <source>
        <dbReference type="UniProtKB" id="Q14766"/>
    </source>
</evidence>
<evidence type="ECO:0000250" key="2">
    <source>
        <dbReference type="UniProtKB" id="Q8N2S1"/>
    </source>
</evidence>
<evidence type="ECO:0000255" key="3"/>
<evidence type="ECO:0000255" key="4">
    <source>
        <dbReference type="PROSITE-ProRule" id="PRU00076"/>
    </source>
</evidence>
<evidence type="ECO:0000255" key="5">
    <source>
        <dbReference type="PROSITE-ProRule" id="PRU00697"/>
    </source>
</evidence>
<evidence type="ECO:0000256" key="6">
    <source>
        <dbReference type="SAM" id="MobiDB-lite"/>
    </source>
</evidence>
<evidence type="ECO:0000269" key="7">
    <source>
    </source>
</evidence>
<evidence type="ECO:0000269" key="8">
    <source>
    </source>
</evidence>
<evidence type="ECO:0000269" key="9">
    <source>
    </source>
</evidence>
<evidence type="ECO:0000303" key="10">
    <source>
    </source>
</evidence>
<evidence type="ECO:0000303" key="11">
    <source>
    </source>
</evidence>
<evidence type="ECO:0000305" key="12"/>
<evidence type="ECO:0007744" key="13">
    <source>
    </source>
</evidence>
<protein>
    <recommendedName>
        <fullName>Latent-transforming growth factor beta-binding protein 4</fullName>
        <shortName>LTBP-4</shortName>
    </recommendedName>
</protein>
<gene>
    <name type="primary">Ltbp4</name>
</gene>
<reference key="1">
    <citation type="journal article" date="2002" name="Genes Dev.">
        <title>Disruption of the gene encoding the latent transforming growth factor-beta binding protein 4 (LTBP-4) causes abnormal lung development, cardiomyopathy, and colorectal cancer.</title>
        <authorList>
            <person name="Sterner-Kock A."/>
            <person name="Thorey I.S."/>
            <person name="Koli K."/>
            <person name="Wempe F."/>
            <person name="Otte J."/>
            <person name="Bangsow T."/>
            <person name="Kuhlmeier K."/>
            <person name="Kirchner T."/>
            <person name="Jin S."/>
            <person name="Keski-Oja J."/>
            <person name="von Melchner H."/>
        </authorList>
    </citation>
    <scope>NUCLEOTIDE SEQUENCE [MRNA] (ISOFORMS 1 AND 2)</scope>
    <scope>DISRUPTION PHENOTYPE</scope>
</reference>
<reference key="2">
    <citation type="journal article" date="2009" name="PLoS Biol.">
        <title>Lineage-specific biology revealed by a finished genome assembly of the mouse.</title>
        <authorList>
            <person name="Church D.M."/>
            <person name="Goodstadt L."/>
            <person name="Hillier L.W."/>
            <person name="Zody M.C."/>
            <person name="Goldstein S."/>
            <person name="She X."/>
            <person name="Bult C.J."/>
            <person name="Agarwala R."/>
            <person name="Cherry J.L."/>
            <person name="DiCuccio M."/>
            <person name="Hlavina W."/>
            <person name="Kapustin Y."/>
            <person name="Meric P."/>
            <person name="Maglott D."/>
            <person name="Birtle Z."/>
            <person name="Marques A.C."/>
            <person name="Graves T."/>
            <person name="Zhou S."/>
            <person name="Teague B."/>
            <person name="Potamousis K."/>
            <person name="Churas C."/>
            <person name="Place M."/>
            <person name="Herschleb J."/>
            <person name="Runnheim R."/>
            <person name="Forrest D."/>
            <person name="Amos-Landgraf J."/>
            <person name="Schwartz D.C."/>
            <person name="Cheng Z."/>
            <person name="Lindblad-Toh K."/>
            <person name="Eichler E.E."/>
            <person name="Ponting C.P."/>
        </authorList>
    </citation>
    <scope>NUCLEOTIDE SEQUENCE [LARGE SCALE GENOMIC DNA]</scope>
    <source>
        <strain>C57BL/6J</strain>
    </source>
</reference>
<reference key="3">
    <citation type="journal article" date="2004" name="Genome Res.">
        <title>The status, quality, and expansion of the NIH full-length cDNA project: the Mammalian Gene Collection (MGC).</title>
        <authorList>
            <consortium name="The MGC Project Team"/>
        </authorList>
    </citation>
    <scope>NUCLEOTIDE SEQUENCE [LARGE SCALE MRNA] OF 60-1666 (ISOFORM 3)</scope>
    <source>
        <strain>C57BL/6J</strain>
        <tissue>Brain</tissue>
    </source>
</reference>
<reference key="4">
    <citation type="journal article" date="2009" name="Am. J. Hum. Genet.">
        <title>Mutations in LTBP4 cause a syndrome of impaired pulmonary, gastrointestinal, genitourinary, musculoskeletal, and dermal development.</title>
        <authorList>
            <person name="Urban Z."/>
            <person name="Hucthagowder V."/>
            <person name="Schuermann N."/>
            <person name="Todorovic V."/>
            <person name="Zilberberg L."/>
            <person name="Choi J."/>
            <person name="Sens C."/>
            <person name="Brown C.W."/>
            <person name="Clark R.D."/>
            <person name="Holland K.E."/>
            <person name="Marble M."/>
            <person name="Sakai L.Y."/>
            <person name="Dabovic B."/>
            <person name="Rifkin D.B."/>
            <person name="Davis E.C."/>
        </authorList>
    </citation>
    <scope>DISRUPTION PHENOTYPE</scope>
</reference>
<reference key="5">
    <citation type="journal article" date="2010" name="Cell">
        <title>A tissue-specific atlas of mouse protein phosphorylation and expression.</title>
        <authorList>
            <person name="Huttlin E.L."/>
            <person name="Jedrychowski M.P."/>
            <person name="Elias J.E."/>
            <person name="Goswami T."/>
            <person name="Rad R."/>
            <person name="Beausoleil S.A."/>
            <person name="Villen J."/>
            <person name="Haas W."/>
            <person name="Sowa M.E."/>
            <person name="Gygi S.P."/>
        </authorList>
    </citation>
    <scope>PHOSPHORYLATION [LARGE SCALE ANALYSIS] AT THR-1564</scope>
    <scope>IDENTIFICATION BY MASS SPECTROMETRY [LARGE SCALE ANALYSIS]</scope>
    <source>
        <tissue>Heart</tissue>
        <tissue>Lung</tissue>
        <tissue>Spleen</tissue>
        <tissue>Testis</tissue>
    </source>
</reference>
<reference key="6">
    <citation type="journal article" date="2015" name="Dis. Model. Mech.">
        <title>Modeling autosomal recessive cutis laxa type 1C in mice reveals distinct functions for Ltbp-4 isoforms.</title>
        <authorList>
            <person name="Bultmann-Mellin I."/>
            <person name="Conradi A."/>
            <person name="Maul A.C."/>
            <person name="Dinger K."/>
            <person name="Wempe F."/>
            <person name="Wohl A.P."/>
            <person name="Imhof T."/>
            <person name="Wunderlich F.T."/>
            <person name="Bunck A.C."/>
            <person name="Nakamura T."/>
            <person name="Koli K."/>
            <person name="Bloch W."/>
            <person name="Ghanem A."/>
            <person name="Heinz A."/>
            <person name="von Melchner H."/>
            <person name="Sengle G."/>
            <person name="Sterner-Kock A."/>
        </authorList>
    </citation>
    <scope>INTERACTION WITH EFEMP2</scope>
</reference>
<sequence length="1666" mass="178642">MRRPGLGGPCPLLLLLLLPAATSASGSSPSPSPSPIEKAVVPSHQAGVAACHCCLDQTPKSSRCTRASCRVRNCPPAKCTGLEGCLTPTPSVPSPSRSPVEKSQVSLNWQPLTLQEARALLRQRRPRGPWARALLKRRPPHRAPAGQARVLCPLICHNGGVCVKPDRCLCPPDFAGKFCQLHSSGARPPAPAMPGLTRSVYTMPLANHRDDEHGVASMVSVHVEHPQEASVVVHQVERVSGPWEEANPEALARAEAAARAEAAAPYTVLAQSAPREDGYSDASGFGYCFRELRGSECASPLPGLRTQEVCCRGEGLAWGVHDCHPCAEHLRNSNQVSGPNGPCPPGFERVNGSCVDVDECATGGRCQHGECANTRGGYTCVCPDGFLLDSSRSSCISQHVISEAKGPCYRVLHDGGCSLPILRNITKQICCCSRVGKAWGRGCQLCPPYGSEGFREICPAGPGYHYSASDLRYNTRPLNQDPPRVTFNQPRVPPATPRPPTGFLPTRRPEPRPDPGPQPEPRPRPEPRPRPESRPRPEPRPRPEPRPQPESQPRPESRPRPESQPWPEFPLPSIPAWTGPEIPESGPSSSMCQRNPQVCGPGRCVPRPSGYTCACDPGFRLGPQGTRCIDIDECRRVPTPCAPGRCENTPGSFRCVCGTGFQAGPRATECLDVDECRRVPPPCDRGRCENTPGSFLCVCPAGYQAAPHGASCQDVDECTQSPGLCGRGVCENLPGSFRCVCPAGFRGSACEEDVDECAQQPPPCGPGRCDNTAGSFHCACPAGFRSRGPGAPCQDVDECSRSPSPCAYGRCENTEGSFKCVCPTGFQPNAAGSECEDVDECENRLACPGQECVNSPGSFQCRACPVGHHLHRGRCTDVDECSSGTPCGLHGQCTNTKGSFHCSCSTGYRAPSGQPGPCADINECLEGDFCFPHGECLNTDGSFTCTCAPGYRPGPRGASCLDVDECSEEDLCQSGICTNTDGSFECICPPGHRAGPDLASCLDIDECRERGPALCGSQRCENSPGSYRCVRDCDPGYHPGPEGTCDDIDECREYGSAICGAQRCENTPGSYRCTPACDPGYQPTPGGGCQDVDECRNRSFCGAHAMCQNLPGSFQCVCDQGYEGARDGRHCVDVNECETLQGVCGSALCENVEGSFLCVCPNSPEEFDPMTGRCVPPRAPAGTFPGSQPQAPASPSLPARPPAPPPPRRPSPPRQGPVSSGRRECYFDTAAPDACDNILARNVTWQECCCTVGEGWGSGCRIQQCPGTETAEYQSLCPHGRGYLVPSGDLSARRDVDECQLFQDQVCKSGVCVNTAPGYSCYCSNGFYYHAHRLECVDNDECADEEPACEGGRCVNTVGSYHCTCEPPLVLDGSRRRCVSNESQSLDDNLGVCWQEVGPDLVCSRPRLDRQATYTECCCLYGEAWGMDCALCPAQDSDDFEALCNVLRPPAYGPPRPGGFGIPYEYGPDIGPPYQSLPYGPDLYPPPVLPYDPYPPPPGPFARREAPYGAPPFDMPDFEDDGGPYGESETPDPPSRGTGWPYRSRDTRGSFPEPEESSERGSYTGALSEPYEGLEAEECGILDGCPHGRCVRVPEGFTCDCFDGYRLDITRMSCVDVNECDEAEATSPLCVNARCVNTDGSFRCICRPGFAPTHQPHHCAPARPRA</sequence>